<feature type="chain" id="PRO_0000204762" description="Protein FLOWERING LOCUS T">
    <location>
        <begin position="1"/>
        <end position="175"/>
    </location>
</feature>
<feature type="splice variant" id="VSP_004543" description="In isoform Short." evidence="13">
    <original>GNEIVCYENPSPTAGIHRVVF</original>
    <variation>AWQANSVCTRVAPELQHSRVC</variation>
    <location>
        <begin position="102"/>
        <end position="122"/>
    </location>
</feature>
<feature type="splice variant" id="VSP_004544" description="In isoform Short." evidence="13">
    <location>
        <begin position="123"/>
        <end position="175"/>
    </location>
</feature>
<feature type="mutagenesis site" description="In ft-4; late-flowering.">
    <original>E</original>
    <variation>K</variation>
    <location>
        <position position="84"/>
    </location>
</feature>
<feature type="mutagenesis site" description="Inhibition of terminal flower formation, but weak effect on flowering time." evidence="2">
    <original>Y</original>
    <variation>H</variation>
    <location>
        <position position="85"/>
    </location>
</feature>
<feature type="mutagenesis site" description="In ft-6; late-flowering.">
    <original>P</original>
    <variation>L</variation>
    <location>
        <position position="94"/>
    </location>
</feature>
<feature type="mutagenesis site" description="No effect on terminal flower formation." evidence="2">
    <original>N</original>
    <variation>M</variation>
    <location>
        <position position="110"/>
    </location>
</feature>
<feature type="mutagenesis site" description="In ft-3; late-flowering.">
    <original>R</original>
    <variation>H</variation>
    <location>
        <position position="119"/>
    </location>
</feature>
<feature type="mutagenesis site" description="No effect on terminal flower formation." evidence="2">
    <original>V</original>
    <variation>F</variation>
    <location>
        <position position="120"/>
    </location>
</feature>
<feature type="mutagenesis site" description="In ft-1; late-flowering.">
    <original>G</original>
    <variation>E</variation>
    <location>
        <position position="171"/>
    </location>
</feature>
<feature type="helix" evidence="20">
    <location>
        <begin position="8"/>
        <end position="11"/>
    </location>
</feature>
<feature type="helix" evidence="20">
    <location>
        <begin position="14"/>
        <end position="17"/>
    </location>
</feature>
<feature type="strand" evidence="20">
    <location>
        <begin position="28"/>
        <end position="32"/>
    </location>
</feature>
<feature type="strand" evidence="21">
    <location>
        <begin position="35"/>
        <end position="37"/>
    </location>
</feature>
<feature type="strand" evidence="21">
    <location>
        <begin position="39"/>
        <end position="42"/>
    </location>
</feature>
<feature type="helix" evidence="20">
    <location>
        <begin position="45"/>
        <end position="47"/>
    </location>
</feature>
<feature type="strand" evidence="19">
    <location>
        <begin position="48"/>
        <end position="50"/>
    </location>
</feature>
<feature type="strand" evidence="20">
    <location>
        <begin position="53"/>
        <end position="56"/>
    </location>
</feature>
<feature type="strand" evidence="20">
    <location>
        <begin position="64"/>
        <end position="71"/>
    </location>
</feature>
<feature type="strand" evidence="20">
    <location>
        <begin position="77"/>
        <end position="79"/>
    </location>
</feature>
<feature type="strand" evidence="20">
    <location>
        <begin position="85"/>
        <end position="94"/>
    </location>
</feature>
<feature type="helix" evidence="20">
    <location>
        <begin position="99"/>
        <end position="101"/>
    </location>
</feature>
<feature type="strand" evidence="20">
    <location>
        <begin position="102"/>
        <end position="106"/>
    </location>
</feature>
<feature type="strand" evidence="19">
    <location>
        <begin position="114"/>
        <end position="116"/>
    </location>
</feature>
<feature type="strand" evidence="20">
    <location>
        <begin position="118"/>
        <end position="126"/>
    </location>
</feature>
<feature type="strand" evidence="19">
    <location>
        <begin position="128"/>
        <end position="130"/>
    </location>
</feature>
<feature type="strand" evidence="19">
    <location>
        <begin position="137"/>
        <end position="139"/>
    </location>
</feature>
<feature type="helix" evidence="20">
    <location>
        <begin position="144"/>
        <end position="150"/>
    </location>
</feature>
<feature type="strand" evidence="20">
    <location>
        <begin position="157"/>
        <end position="164"/>
    </location>
</feature>
<keyword id="KW-0002">3D-structure</keyword>
<keyword id="KW-0025">Alternative splicing</keyword>
<keyword id="KW-0963">Cytoplasm</keyword>
<keyword id="KW-0217">Developmental protein</keyword>
<keyword id="KW-0221">Differentiation</keyword>
<keyword id="KW-0256">Endoplasmic reticulum</keyword>
<keyword id="KW-0287">Flowering</keyword>
<keyword id="KW-0539">Nucleus</keyword>
<keyword id="KW-1185">Reference proteome</keyword>
<evidence type="ECO:0000269" key="1">
    <source>
    </source>
</evidence>
<evidence type="ECO:0000269" key="2">
    <source>
    </source>
</evidence>
<evidence type="ECO:0000269" key="3">
    <source>
    </source>
</evidence>
<evidence type="ECO:0000269" key="4">
    <source>
    </source>
</evidence>
<evidence type="ECO:0000269" key="5">
    <source>
    </source>
</evidence>
<evidence type="ECO:0000269" key="6">
    <source>
    </source>
</evidence>
<evidence type="ECO:0000269" key="7">
    <source>
    </source>
</evidence>
<evidence type="ECO:0000269" key="8">
    <source>
    </source>
</evidence>
<evidence type="ECO:0000269" key="9">
    <source>
    </source>
</evidence>
<evidence type="ECO:0000269" key="10">
    <source>
    </source>
</evidence>
<evidence type="ECO:0000269" key="11">
    <source>
    </source>
</evidence>
<evidence type="ECO:0000269" key="12">
    <source>
    </source>
</evidence>
<evidence type="ECO:0000303" key="13">
    <source>
    </source>
</evidence>
<evidence type="ECO:0000305" key="14"/>
<evidence type="ECO:0000305" key="15">
    <source>
    </source>
</evidence>
<evidence type="ECO:0000305" key="16">
    <source>
    </source>
</evidence>
<evidence type="ECO:0000312" key="17">
    <source>
        <dbReference type="Araport" id="AT1G65480"/>
    </source>
</evidence>
<evidence type="ECO:0000312" key="18">
    <source>
        <dbReference type="EMBL" id="AAB60904.1"/>
    </source>
</evidence>
<evidence type="ECO:0007829" key="19">
    <source>
        <dbReference type="PDB" id="1WKP"/>
    </source>
</evidence>
<evidence type="ECO:0007829" key="20">
    <source>
        <dbReference type="PDB" id="6IGG"/>
    </source>
</evidence>
<evidence type="ECO:0007829" key="21">
    <source>
        <dbReference type="PDB" id="6IGH"/>
    </source>
</evidence>
<sequence>MSINIRDPLIVSRVVGDVLDPFNRSITLKVTYGQREVTNGLDLRPSQVQNKPRVEIGGEDLRNFYTLVMVDPDVPSPSNPHLREYLHWLVTDIPATTGTTFGNEIVCYENPSPTAGIHRVVFILFRQLGRQTVYAPGWRQNFNTREFAEIYNLGLPVAAVFYNCQRESGCGGRRL</sequence>
<comment type="function">
    <text evidence="3 4 5">Component of the mobile flower-promoting signal (floral stimulus or florigen). Promotes the transition from vegetative growth to flowering. Required for 'SEPALLATA3' (SEP3) and 'FRUITFULL' (FUL) accumulation in mature rosette leaves. Seems to acts in parallel with 'LEAFY' to induce flowering by regulating 'APETALA1'. Translated in leaves and then transported to the shoot apical meristem where it activates the transcription of several floral meristem identity genes. May play a role in both the autonomous and the long-day flowering pathways.</text>
</comment>
<comment type="subunit">
    <text evidence="3 4 6 11 12">Interacts with FD/BZIP14 and FDP/BZIP27 (PubMed:16099979, PubMed:16099980). Interacts with FTIP1/MCTP1 in phloem companion cells (PubMed:22529749, PubMed:29259105). Interacts with NAKR1 (PubMed:27255839).</text>
</comment>
<comment type="interaction">
    <interactant intactId="EBI-636490">
        <id>Q9SXZ2</id>
    </interactant>
    <interactant intactId="EBI-636507">
        <id>Q84JK2</id>
        <label>FD</label>
    </interactant>
    <organismsDiffer>false</organismsDiffer>
    <experiments>4</experiments>
</comment>
<comment type="interaction">
    <interactant intactId="EBI-636490">
        <id>Q9SXZ2</id>
    </interactant>
    <interactant intactId="EBI-1393271">
        <id>Q9FVI6</id>
        <label>HDG6</label>
    </interactant>
    <organismsDiffer>false</organismsDiffer>
    <experiments>2</experiments>
</comment>
<comment type="subcellular location">
    <subcellularLocation>
        <location evidence="3">Cytoplasm</location>
    </subcellularLocation>
    <subcellularLocation>
        <location evidence="3 6">Nucleus</location>
    </subcellularLocation>
    <subcellularLocation>
        <location evidence="6">Endoplasmic reticulum</location>
    </subcellularLocation>
</comment>
<comment type="alternative products">
    <event type="alternative splicing"/>
    <isoform>
        <id>Q9SXZ2-1</id>
        <name>Long</name>
        <sequence type="displayed"/>
    </isoform>
    <isoform>
        <id>Q9SXZ2-2</id>
        <name>Short</name>
        <sequence type="described" ref="VSP_004543 VSP_004544"/>
    </isoform>
</comment>
<comment type="tissue specificity">
    <text evidence="1">Mostly localized in leaves vasculature.</text>
</comment>
<comment type="developmental stage">
    <text>Expression gradually increases with time under both long-day (LD) and short-day (SD) photoperiods. Under LD conditions, expression is first detected on day 4 and plateaued around day 6, preceeding floral commitment around days 9 and 10.</text>
</comment>
<comment type="induction">
    <text evidence="4 7 8 9 10">Levels follow a circadian cycle with a progressive accumulation during the day time (PubMed:25343985). By light. Expression is delayed and reduced under SD conditions. Repressed by FLC. Up-Regulated by VOZ1 and/or VOZ2 (PubMed:22904146). Up-regulated by APL/FE (PubMed:26239308). Down-regulated by the H3K36me2 modification at the FT locus produced by the interaction between EFM and JMJ30 (PubMed:25132385). Repressed by MYB56 (PubMed:25343985).</text>
</comment>
<comment type="miscellaneous">
    <text>Mutagenesis of Tyr-85 to His converts the activator of flowering 'FLOWERING LOCUS T' into a 'TERMINAL FLOWER 1'-like repressor of flowering.</text>
</comment>
<comment type="similarity">
    <text evidence="14">Belongs to the phosphatidylethanolamine-binding protein family.</text>
</comment>
<comment type="caution">
    <text evidence="15 16">An article reported that transcripts can move in the phloem from leaves to shoot apex to induce flowering; however, this paper was later retracted.</text>
</comment>
<gene>
    <name evidence="13" type="primary">FT</name>
    <name evidence="17" type="ordered locus">At1g65480</name>
    <name evidence="18" type="ORF">F5I14.3</name>
</gene>
<accession>Q9SXZ2</accession>
<accession>O04467</accession>
<reference key="1">
    <citation type="journal article" date="1999" name="Science">
        <title>A pair of related genes with antagonistic roles in mediating flowering signals.</title>
        <authorList>
            <person name="Kobayashi Y."/>
            <person name="Kaya H."/>
            <person name="Goto K."/>
            <person name="Iwabuchi M."/>
            <person name="Araki T."/>
        </authorList>
    </citation>
    <scope>NUCLEOTIDE SEQUENCE [MRNA] (ISOFORMS SHORT AND LONG)</scope>
    <scope>MUTANTS FT-4; FT-5 AND FT-6</scope>
    <source>
        <strain>cv. Landsberg erecta</strain>
        <strain>cv. No-0</strain>
    </source>
</reference>
<reference key="2">
    <citation type="journal article" date="1999" name="Science">
        <title>Activation tagging of the floral inducer FT.</title>
        <authorList>
            <person name="Kardailsky I."/>
            <person name="Shukla V.K."/>
            <person name="Ahn J.H."/>
            <person name="Dagenais N."/>
            <person name="Christensen S.K."/>
            <person name="Nguyen J.T."/>
            <person name="Chory J."/>
            <person name="Harrison M.J."/>
            <person name="Weigel D."/>
        </authorList>
    </citation>
    <scope>NUCLEOTIDE SEQUENCE [GENOMIC DNA] (ISOFORM LONG)</scope>
    <scope>MUTANTS FT-1 AND FT-3</scope>
    <source>
        <strain>cv. Columbia</strain>
    </source>
</reference>
<reference key="3">
    <citation type="journal article" date="2000" name="Nature">
        <title>Sequence and analysis of chromosome 1 of the plant Arabidopsis thaliana.</title>
        <authorList>
            <person name="Theologis A."/>
            <person name="Ecker J.R."/>
            <person name="Palm C.J."/>
            <person name="Federspiel N.A."/>
            <person name="Kaul S."/>
            <person name="White O."/>
            <person name="Alonso J."/>
            <person name="Altafi H."/>
            <person name="Araujo R."/>
            <person name="Bowman C.L."/>
            <person name="Brooks S.Y."/>
            <person name="Buehler E."/>
            <person name="Chan A."/>
            <person name="Chao Q."/>
            <person name="Chen H."/>
            <person name="Cheuk R.F."/>
            <person name="Chin C.W."/>
            <person name="Chung M.K."/>
            <person name="Conn L."/>
            <person name="Conway A.B."/>
            <person name="Conway A.R."/>
            <person name="Creasy T.H."/>
            <person name="Dewar K."/>
            <person name="Dunn P."/>
            <person name="Etgu P."/>
            <person name="Feldblyum T.V."/>
            <person name="Feng J.-D."/>
            <person name="Fong B."/>
            <person name="Fujii C.Y."/>
            <person name="Gill J.E."/>
            <person name="Goldsmith A.D."/>
            <person name="Haas B."/>
            <person name="Hansen N.F."/>
            <person name="Hughes B."/>
            <person name="Huizar L."/>
            <person name="Hunter J.L."/>
            <person name="Jenkins J."/>
            <person name="Johnson-Hopson C."/>
            <person name="Khan S."/>
            <person name="Khaykin E."/>
            <person name="Kim C.J."/>
            <person name="Koo H.L."/>
            <person name="Kremenetskaia I."/>
            <person name="Kurtz D.B."/>
            <person name="Kwan A."/>
            <person name="Lam B."/>
            <person name="Langin-Hooper S."/>
            <person name="Lee A."/>
            <person name="Lee J.M."/>
            <person name="Lenz C.A."/>
            <person name="Li J.H."/>
            <person name="Li Y.-P."/>
            <person name="Lin X."/>
            <person name="Liu S.X."/>
            <person name="Liu Z.A."/>
            <person name="Luros J.S."/>
            <person name="Maiti R."/>
            <person name="Marziali A."/>
            <person name="Militscher J."/>
            <person name="Miranda M."/>
            <person name="Nguyen M."/>
            <person name="Nierman W.C."/>
            <person name="Osborne B.I."/>
            <person name="Pai G."/>
            <person name="Peterson J."/>
            <person name="Pham P.K."/>
            <person name="Rizzo M."/>
            <person name="Rooney T."/>
            <person name="Rowley D."/>
            <person name="Sakano H."/>
            <person name="Salzberg S.L."/>
            <person name="Schwartz J.R."/>
            <person name="Shinn P."/>
            <person name="Southwick A.M."/>
            <person name="Sun H."/>
            <person name="Tallon L.J."/>
            <person name="Tambunga G."/>
            <person name="Toriumi M.J."/>
            <person name="Town C.D."/>
            <person name="Utterback T."/>
            <person name="Van Aken S."/>
            <person name="Vaysberg M."/>
            <person name="Vysotskaia V.S."/>
            <person name="Walker M."/>
            <person name="Wu D."/>
            <person name="Yu G."/>
            <person name="Fraser C.M."/>
            <person name="Venter J.C."/>
            <person name="Davis R.W."/>
        </authorList>
    </citation>
    <scope>NUCLEOTIDE SEQUENCE [LARGE SCALE GENOMIC DNA]</scope>
    <source>
        <strain>cv. Columbia</strain>
    </source>
</reference>
<reference key="4">
    <citation type="journal article" date="2017" name="Plant J.">
        <title>Araport11: a complete reannotation of the Arabidopsis thaliana reference genome.</title>
        <authorList>
            <person name="Cheng C.Y."/>
            <person name="Krishnakumar V."/>
            <person name="Chan A.P."/>
            <person name="Thibaud-Nissen F."/>
            <person name="Schobel S."/>
            <person name="Town C.D."/>
        </authorList>
    </citation>
    <scope>GENOME REANNOTATION</scope>
    <source>
        <strain>cv. Columbia</strain>
    </source>
</reference>
<reference key="5">
    <citation type="journal article" date="2003" name="Science">
        <title>Empirical analysis of transcriptional activity in the Arabidopsis genome.</title>
        <authorList>
            <person name="Yamada K."/>
            <person name="Lim J."/>
            <person name="Dale J.M."/>
            <person name="Chen H."/>
            <person name="Shinn P."/>
            <person name="Palm C.J."/>
            <person name="Southwick A.M."/>
            <person name="Wu H.C."/>
            <person name="Kim C.J."/>
            <person name="Nguyen M."/>
            <person name="Pham P.K."/>
            <person name="Cheuk R.F."/>
            <person name="Karlin-Newmann G."/>
            <person name="Liu S.X."/>
            <person name="Lam B."/>
            <person name="Sakano H."/>
            <person name="Wu T."/>
            <person name="Yu G."/>
            <person name="Miranda M."/>
            <person name="Quach H.L."/>
            <person name="Tripp M."/>
            <person name="Chang C.H."/>
            <person name="Lee J.M."/>
            <person name="Toriumi M.J."/>
            <person name="Chan M.M."/>
            <person name="Tang C.C."/>
            <person name="Onodera C.S."/>
            <person name="Deng J.M."/>
            <person name="Akiyama K."/>
            <person name="Ansari Y."/>
            <person name="Arakawa T."/>
            <person name="Banh J."/>
            <person name="Banno F."/>
            <person name="Bowser L."/>
            <person name="Brooks S.Y."/>
            <person name="Carninci P."/>
            <person name="Chao Q."/>
            <person name="Choy N."/>
            <person name="Enju A."/>
            <person name="Goldsmith A.D."/>
            <person name="Gurjal M."/>
            <person name="Hansen N.F."/>
            <person name="Hayashizaki Y."/>
            <person name="Johnson-Hopson C."/>
            <person name="Hsuan V.W."/>
            <person name="Iida K."/>
            <person name="Karnes M."/>
            <person name="Khan S."/>
            <person name="Koesema E."/>
            <person name="Ishida J."/>
            <person name="Jiang P.X."/>
            <person name="Jones T."/>
            <person name="Kawai J."/>
            <person name="Kamiya A."/>
            <person name="Meyers C."/>
            <person name="Nakajima M."/>
            <person name="Narusaka M."/>
            <person name="Seki M."/>
            <person name="Sakurai T."/>
            <person name="Satou M."/>
            <person name="Tamse R."/>
            <person name="Vaysberg M."/>
            <person name="Wallender E.K."/>
            <person name="Wong C."/>
            <person name="Yamamura Y."/>
            <person name="Yuan S."/>
            <person name="Shinozaki K."/>
            <person name="Davis R.W."/>
            <person name="Theologis A."/>
            <person name="Ecker J.R."/>
        </authorList>
    </citation>
    <scope>NUCLEOTIDE SEQUENCE [LARGE SCALE MRNA] (ISOFORM LONG)</scope>
    <source>
        <strain>cv. Columbia</strain>
    </source>
</reference>
<reference key="6">
    <citation type="journal article" date="2005" name="Plant Cell">
        <title>The flowering integrator FT regulates SEPALLATA3 and FRUITFULL accumulation in Arabidopsis leaves.</title>
        <authorList>
            <person name="Teper-Bamnolker P."/>
            <person name="Samach A."/>
        </authorList>
    </citation>
    <scope>FUNCTION</scope>
</reference>
<reference key="7">
    <citation type="journal article" date="2005" name="Plant Physiol.">
        <title>Integration of flowering signals in winter-annual Arabidopsis.</title>
        <authorList>
            <person name="Michaels S.D."/>
            <person name="Himelblau E."/>
            <person name="Kim S.Y."/>
            <person name="Schomburg F.M."/>
            <person name="Amasino R.M."/>
        </authorList>
    </citation>
    <scope>TISSUE SPECIFICITY</scope>
</reference>
<reference key="8">
    <citation type="journal article" date="2005" name="Proc. Natl. Acad. Sci. U.S.A.">
        <title>A single amino acid converts a repressor to an activator of flowering.</title>
        <authorList>
            <person name="Hanzawa Y."/>
            <person name="Money T."/>
            <person name="Bradley D."/>
        </authorList>
    </citation>
    <scope>MUTAGENESIS OF TYR-85; ASN-110 AND VAL-120</scope>
</reference>
<reference key="9">
    <citation type="journal article" date="2005" name="Science">
        <title>FD, a bZIP protein mediating signals from the floral pathway integrator FT at the shoot apex.</title>
        <authorList>
            <person name="Abe M."/>
            <person name="Kobayashi Y."/>
            <person name="Yamamoto S."/>
            <person name="Daimon Y."/>
            <person name="Yamaguchi A."/>
            <person name="Ikeda Y."/>
            <person name="Ichinoki H."/>
            <person name="Notaguchi M."/>
            <person name="Goto K."/>
            <person name="Araki T."/>
        </authorList>
    </citation>
    <scope>FUNCTION</scope>
    <scope>SUBCELLULAR LOCATION</scope>
    <scope>INTERACTION WITH FD/BZIP14 AND FDP/BZIP27</scope>
</reference>
<reference key="10">
    <citation type="journal article" date="2005" name="Science">
        <title>Integration of spatial and temporal information during floral induction in Arabidopsis.</title>
        <authorList>
            <person name="Wigge P.A."/>
            <person name="Kim M.C."/>
            <person name="Jaeger K.-E."/>
            <person name="Busch W."/>
            <person name="Schmid M."/>
            <person name="Lohmann J.U."/>
            <person name="Weigel D."/>
        </authorList>
    </citation>
    <scope>FUNCTION</scope>
    <scope>INDUCTION</scope>
    <scope>INTERACTION WITH FD/BZIP14 AND FDP/BZIP27</scope>
</reference>
<reference key="11">
    <citation type="journal article" date="2005" name="Science">
        <title>The mRNA of the Arabidopsis gene FT moves from leaf to shoot apex and induces flowering.</title>
        <authorList>
            <person name="Huang T."/>
            <person name="Boehlenius H."/>
            <person name="Eriksson S."/>
            <person name="Parcy F."/>
            <person name="Nilsson O."/>
        </authorList>
    </citation>
    <scope>RETRACTED PAPER</scope>
</reference>
<reference key="12">
    <citation type="journal article" date="2007" name="Science">
        <authorList>
            <person name="Boehlenius H."/>
            <person name="Eriksson S."/>
            <person name="Parcy F."/>
            <person name="Nilsson O."/>
        </authorList>
    </citation>
    <scope>RETRACTION NOTICE OF PUBMED:16099949</scope>
</reference>
<reference key="13">
    <citation type="journal article" date="2012" name="Plant Cell">
        <title>The phytochrome-interacting VASCULAR PLANT ONE-ZINC FINGER1 and VOZ2 redundantly regulate flowering in Arabidopsis.</title>
        <authorList>
            <person name="Yasui Y."/>
            <person name="Mukougawa K."/>
            <person name="Uemoto M."/>
            <person name="Yokofuji A."/>
            <person name="Suzuri R."/>
            <person name="Nishitani A."/>
            <person name="Kohchi T."/>
        </authorList>
    </citation>
    <scope>INDUCTION</scope>
</reference>
<reference key="14">
    <citation type="journal article" date="2012" name="PLoS Biol.">
        <title>FTIP1 is an essential regulator required for florigen transport.</title>
        <authorList>
            <person name="Liu L."/>
            <person name="Liu C."/>
            <person name="Hou X."/>
            <person name="Xi W."/>
            <person name="Shen L."/>
            <person name="Tao Z."/>
            <person name="Wang Y."/>
            <person name="Yu H."/>
        </authorList>
    </citation>
    <scope>INTERACTION WITH FTIP1</scope>
    <scope>SUBCELLULAR LOCATION</scope>
</reference>
<reference key="15">
    <citation type="journal article" date="2014" name="Dev. Cell">
        <title>A MYB-domain protein EFM mediates flowering responses to environmental cues in Arabidopsis.</title>
        <authorList>
            <person name="Yan Y."/>
            <person name="Shen L."/>
            <person name="Chen Y."/>
            <person name="Bao S."/>
            <person name="Thong Z."/>
            <person name="Yu H."/>
        </authorList>
    </citation>
    <scope>INDUCTION</scope>
</reference>
<reference key="16">
    <citation type="journal article" date="2014" name="Mol. Plant">
        <title>Identification of Arabidopsis MYB56 as a novel substrate for CRL3BPM E3 ligases.</title>
        <authorList>
            <person name="Chen L."/>
            <person name="Bernhardt A."/>
            <person name="Lee J."/>
            <person name="Hellmann H."/>
        </authorList>
    </citation>
    <scope>INDUCTION</scope>
    <scope>REPRESSION BY MYB56</scope>
    <source>
        <strain>cv. Columbia</strain>
    </source>
</reference>
<reference key="17">
    <citation type="journal article" date="2015" name="Plant J.">
        <title>FE, a phloem-specific Myb-related protein, promotes flowering through transcriptional activation of FLOWERING LOCUS T and FLOWERING LOCUS T INTERACTING PROTEIN 1.</title>
        <authorList>
            <person name="Abe M."/>
            <person name="Kaya H."/>
            <person name="Watanabe-Taneda A."/>
            <person name="Shibuta M."/>
            <person name="Yamaguchi A."/>
            <person name="Sakamoto T."/>
            <person name="Kurata T."/>
            <person name="Ausin I."/>
            <person name="Araki T."/>
            <person name="Alonso-Blanco C."/>
        </authorList>
    </citation>
    <scope>INDUCTION BY APL/FE</scope>
</reference>
<reference key="18">
    <citation type="journal article" date="2016" name="Nat. Plants">
        <title>NaKR1 regulates long-distance movement of FLOWERING LOCUS T in Arabidopsis.</title>
        <authorList>
            <person name="Zhu Y."/>
            <person name="Liu L."/>
            <person name="Shen L."/>
            <person name="Yu H."/>
        </authorList>
    </citation>
    <scope>INTERACTION WITH NAKR1</scope>
</reference>
<reference key="19">
    <citation type="journal article" date="2018" name="Plant Physiol.">
        <title>Characterization of multiple C2 domain and transmembrane region proteins in Arabidopsis.</title>
        <authorList>
            <person name="Liu L."/>
            <person name="Li C."/>
            <person name="Liang Z."/>
            <person name="Yu H."/>
        </authorList>
    </citation>
    <scope>INTERACTION WITH FTIP1/MCTP1</scope>
    <source>
        <strain>cv. Columbia</strain>
    </source>
</reference>
<reference key="20">
    <citation type="journal article" date="2006" name="EMBO J.">
        <title>A divergent external loop confers antagonistic activity on floral regulators FT and TFL1.</title>
        <authorList>
            <person name="Ahn J.H."/>
            <person name="Miller D."/>
            <person name="Winter V.J."/>
            <person name="Banfield M.J."/>
            <person name="Lee J.H."/>
            <person name="Yoo S.Y."/>
            <person name="Henz S.R."/>
            <person name="Brady R.L."/>
            <person name="Weigel D."/>
        </authorList>
    </citation>
    <scope>X-RAY CRYSTALLOGRAPHY (2.6 ANGSTROMS) OF 1-163</scope>
</reference>
<proteinExistence type="evidence at protein level"/>
<organism>
    <name type="scientific">Arabidopsis thaliana</name>
    <name type="common">Mouse-ear cress</name>
    <dbReference type="NCBI Taxonomy" id="3702"/>
    <lineage>
        <taxon>Eukaryota</taxon>
        <taxon>Viridiplantae</taxon>
        <taxon>Streptophyta</taxon>
        <taxon>Embryophyta</taxon>
        <taxon>Tracheophyta</taxon>
        <taxon>Spermatophyta</taxon>
        <taxon>Magnoliopsida</taxon>
        <taxon>eudicotyledons</taxon>
        <taxon>Gunneridae</taxon>
        <taxon>Pentapetalae</taxon>
        <taxon>rosids</taxon>
        <taxon>malvids</taxon>
        <taxon>Brassicales</taxon>
        <taxon>Brassicaceae</taxon>
        <taxon>Camelineae</taxon>
        <taxon>Arabidopsis</taxon>
    </lineage>
</organism>
<protein>
    <recommendedName>
        <fullName evidence="13">Protein FLOWERING LOCUS T</fullName>
    </recommendedName>
</protein>
<dbReference type="EMBL" id="AB027504">
    <property type="protein sequence ID" value="BAA77838.1"/>
    <property type="molecule type" value="mRNA"/>
</dbReference>
<dbReference type="EMBL" id="AB027505">
    <property type="protein sequence ID" value="BAA77839.1"/>
    <property type="molecule type" value="mRNA"/>
</dbReference>
<dbReference type="EMBL" id="AF152096">
    <property type="protein sequence ID" value="AAF03936.1"/>
    <property type="molecule type" value="Genomic_DNA"/>
</dbReference>
<dbReference type="EMBL" id="AC001229">
    <property type="protein sequence ID" value="AAB60904.1"/>
    <property type="molecule type" value="Genomic_DNA"/>
</dbReference>
<dbReference type="EMBL" id="CP002684">
    <property type="protein sequence ID" value="AEE34381.1"/>
    <property type="molecule type" value="Genomic_DNA"/>
</dbReference>
<dbReference type="EMBL" id="AY065378">
    <property type="protein sequence ID" value="AAL38819.1"/>
    <property type="molecule type" value="mRNA"/>
</dbReference>
<dbReference type="EMBL" id="AY133813">
    <property type="protein sequence ID" value="AAM91747.1"/>
    <property type="molecule type" value="mRNA"/>
</dbReference>
<dbReference type="PIR" id="T52447">
    <property type="entry name" value="T52447"/>
</dbReference>
<dbReference type="PIR" id="T52448">
    <property type="entry name" value="T52448"/>
</dbReference>
<dbReference type="RefSeq" id="NP_176726.1">
    <molecule id="Q9SXZ2-1"/>
    <property type="nucleotide sequence ID" value="NM_105222.3"/>
</dbReference>
<dbReference type="PDB" id="1WKP">
    <property type="method" value="X-ray"/>
    <property type="resolution" value="2.60 A"/>
    <property type="chains" value="A/B/C/D=1-168"/>
</dbReference>
<dbReference type="PDB" id="6IGG">
    <property type="method" value="X-ray"/>
    <property type="resolution" value="1.00 A"/>
    <property type="chains" value="A=1-168"/>
</dbReference>
<dbReference type="PDB" id="6IGH">
    <property type="method" value="X-ray"/>
    <property type="resolution" value="1.01 A"/>
    <property type="chains" value="A=1-168"/>
</dbReference>
<dbReference type="PDB" id="6IGI">
    <property type="method" value="X-ray"/>
    <property type="resolution" value="1.33 A"/>
    <property type="chains" value="A=1-168"/>
</dbReference>
<dbReference type="PDB" id="6IGJ">
    <property type="method" value="X-ray"/>
    <property type="resolution" value="1.50 A"/>
    <property type="chains" value="A=1-168"/>
</dbReference>
<dbReference type="PDBsum" id="1WKP"/>
<dbReference type="PDBsum" id="6IGG"/>
<dbReference type="PDBsum" id="6IGH"/>
<dbReference type="PDBsum" id="6IGI"/>
<dbReference type="PDBsum" id="6IGJ"/>
<dbReference type="SMR" id="Q9SXZ2"/>
<dbReference type="BioGRID" id="28080">
    <property type="interactions" value="17"/>
</dbReference>
<dbReference type="FunCoup" id="Q9SXZ2">
    <property type="interactions" value="954"/>
</dbReference>
<dbReference type="IntAct" id="Q9SXZ2">
    <property type="interactions" value="8"/>
</dbReference>
<dbReference type="STRING" id="3702.Q9SXZ2"/>
<dbReference type="GlyGen" id="Q9SXZ2">
    <property type="glycosylation" value="1 site"/>
</dbReference>
<dbReference type="PaxDb" id="3702-AT1G65480.1"/>
<dbReference type="ProteomicsDB" id="230018">
    <molecule id="Q9SXZ2-1"/>
</dbReference>
<dbReference type="EnsemblPlants" id="AT1G65480.1">
    <molecule id="Q9SXZ2-1"/>
    <property type="protein sequence ID" value="AT1G65480.1"/>
    <property type="gene ID" value="AT1G65480"/>
</dbReference>
<dbReference type="GeneID" id="842859"/>
<dbReference type="Gramene" id="AT1G65480.1">
    <molecule id="Q9SXZ2-1"/>
    <property type="protein sequence ID" value="AT1G65480.1"/>
    <property type="gene ID" value="AT1G65480"/>
</dbReference>
<dbReference type="KEGG" id="ath:AT1G65480"/>
<dbReference type="Araport" id="AT1G65480"/>
<dbReference type="TAIR" id="AT1G65480">
    <property type="gene designation" value="FT"/>
</dbReference>
<dbReference type="eggNOG" id="KOG3346">
    <property type="taxonomic scope" value="Eukaryota"/>
</dbReference>
<dbReference type="HOGENOM" id="CLU_043994_6_1_1"/>
<dbReference type="InParanoid" id="Q9SXZ2"/>
<dbReference type="OrthoDB" id="2506647at2759"/>
<dbReference type="PhylomeDB" id="Q9SXZ2"/>
<dbReference type="EvolutionaryTrace" id="Q9SXZ2"/>
<dbReference type="PRO" id="PR:Q9SXZ2"/>
<dbReference type="Proteomes" id="UP000006548">
    <property type="component" value="Chromosome 1"/>
</dbReference>
<dbReference type="ExpressionAtlas" id="Q9SXZ2">
    <property type="expression patterns" value="baseline and differential"/>
</dbReference>
<dbReference type="GO" id="GO:0005737">
    <property type="term" value="C:cytoplasm"/>
    <property type="evidence" value="ECO:0000314"/>
    <property type="project" value="TAIR"/>
</dbReference>
<dbReference type="GO" id="GO:0005783">
    <property type="term" value="C:endoplasmic reticulum"/>
    <property type="evidence" value="ECO:0007669"/>
    <property type="project" value="UniProtKB-SubCell"/>
</dbReference>
<dbReference type="GO" id="GO:0005634">
    <property type="term" value="C:nucleus"/>
    <property type="evidence" value="ECO:0000314"/>
    <property type="project" value="TAIR"/>
</dbReference>
<dbReference type="GO" id="GO:0008429">
    <property type="term" value="F:phosphatidylethanolamine binding"/>
    <property type="evidence" value="ECO:0000250"/>
    <property type="project" value="TAIR"/>
</dbReference>
<dbReference type="GO" id="GO:0030154">
    <property type="term" value="P:cell differentiation"/>
    <property type="evidence" value="ECO:0007669"/>
    <property type="project" value="UniProtKB-KW"/>
</dbReference>
<dbReference type="GO" id="GO:0009908">
    <property type="term" value="P:flower development"/>
    <property type="evidence" value="ECO:0007669"/>
    <property type="project" value="UniProtKB-KW"/>
</dbReference>
<dbReference type="GO" id="GO:0010022">
    <property type="term" value="P:meristem determinacy"/>
    <property type="evidence" value="ECO:0000316"/>
    <property type="project" value="TAIR"/>
</dbReference>
<dbReference type="GO" id="GO:0048573">
    <property type="term" value="P:photoperiodism, flowering"/>
    <property type="evidence" value="ECO:0000270"/>
    <property type="project" value="TAIR"/>
</dbReference>
<dbReference type="GO" id="GO:0009911">
    <property type="term" value="P:positive regulation of flower development"/>
    <property type="evidence" value="ECO:0000315"/>
    <property type="project" value="TAIR"/>
</dbReference>
<dbReference type="GO" id="GO:0009909">
    <property type="term" value="P:regulation of flower development"/>
    <property type="evidence" value="ECO:0000316"/>
    <property type="project" value="TAIR"/>
</dbReference>
<dbReference type="GO" id="GO:0010119">
    <property type="term" value="P:regulation of stomatal movement"/>
    <property type="evidence" value="ECO:0000315"/>
    <property type="project" value="TAIR"/>
</dbReference>
<dbReference type="CDD" id="cd00866">
    <property type="entry name" value="PEBP_euk"/>
    <property type="match status" value="1"/>
</dbReference>
<dbReference type="FunFam" id="3.90.280.10:FF:000001">
    <property type="entry name" value="Terminal flower 1"/>
    <property type="match status" value="1"/>
</dbReference>
<dbReference type="Gene3D" id="3.90.280.10">
    <property type="entry name" value="PEBP-like"/>
    <property type="match status" value="1"/>
</dbReference>
<dbReference type="InterPro" id="IPR008914">
    <property type="entry name" value="PEBP"/>
</dbReference>
<dbReference type="InterPro" id="IPR036610">
    <property type="entry name" value="PEBP-like_sf"/>
</dbReference>
<dbReference type="InterPro" id="IPR035810">
    <property type="entry name" value="PEBP_euk"/>
</dbReference>
<dbReference type="InterPro" id="IPR001858">
    <property type="entry name" value="Phosphatidylethanolamine-bd_CS"/>
</dbReference>
<dbReference type="PANTHER" id="PTHR11362">
    <property type="entry name" value="PHOSPHATIDYLETHANOLAMINE-BINDING PROTEIN"/>
    <property type="match status" value="1"/>
</dbReference>
<dbReference type="PANTHER" id="PTHR11362:SF9">
    <property type="entry name" value="PROTEIN FLOWERING LOCUS T-RELATED"/>
    <property type="match status" value="1"/>
</dbReference>
<dbReference type="Pfam" id="PF01161">
    <property type="entry name" value="PBP"/>
    <property type="match status" value="1"/>
</dbReference>
<dbReference type="SUPFAM" id="SSF49777">
    <property type="entry name" value="PEBP-like"/>
    <property type="match status" value="1"/>
</dbReference>
<dbReference type="PROSITE" id="PS01220">
    <property type="entry name" value="PBP"/>
    <property type="match status" value="1"/>
</dbReference>
<name>FT_ARATH</name>